<comment type="function">
    <text evidence="1">Cell division protein that is part of the divisome complex and is recruited early to the Z-ring. Probably stimulates Z-ring formation, perhaps through the cross-linking of FtsZ protofilaments. Its function overlaps with FtsA.</text>
</comment>
<comment type="subunit">
    <text evidence="1">Homodimer. Interacts with FtsZ.</text>
</comment>
<comment type="subcellular location">
    <subcellularLocation>
        <location evidence="1">Cytoplasm</location>
    </subcellularLocation>
    <text evidence="1">Localizes to the division site, in a FtsZ-dependent manner.</text>
</comment>
<comment type="similarity">
    <text evidence="1">Belongs to the SepF family.</text>
</comment>
<reference key="1">
    <citation type="submission" date="2008-10" db="EMBL/GenBank/DDBJ databases">
        <title>Genome sequence of Bacillus anthracis str. CDC 684.</title>
        <authorList>
            <person name="Dodson R.J."/>
            <person name="Munk A.C."/>
            <person name="Brettin T."/>
            <person name="Bruce D."/>
            <person name="Detter C."/>
            <person name="Tapia R."/>
            <person name="Han C."/>
            <person name="Sutton G."/>
            <person name="Sims D."/>
        </authorList>
    </citation>
    <scope>NUCLEOTIDE SEQUENCE [LARGE SCALE GENOMIC DNA]</scope>
    <source>
        <strain>CDC 684 / NRRL 3495</strain>
    </source>
</reference>
<name>SEPF_BACAC</name>
<feature type="chain" id="PRO_1000164525" description="Cell division protein SepF">
    <location>
        <begin position="1"/>
        <end position="156"/>
    </location>
</feature>
<feature type="region of interest" description="Disordered" evidence="2">
    <location>
        <begin position="23"/>
        <end position="49"/>
    </location>
</feature>
<feature type="compositionally biased region" description="Basic and acidic residues" evidence="2">
    <location>
        <begin position="23"/>
        <end position="36"/>
    </location>
</feature>
<accession>C3L726</accession>
<dbReference type="EMBL" id="CP001215">
    <property type="protein sequence ID" value="ACP15254.1"/>
    <property type="molecule type" value="Genomic_DNA"/>
</dbReference>
<dbReference type="RefSeq" id="WP_000119134.1">
    <property type="nucleotide sequence ID" value="NC_012581.1"/>
</dbReference>
<dbReference type="SMR" id="C3L726"/>
<dbReference type="KEGG" id="bah:BAMEG_0589"/>
<dbReference type="HOGENOM" id="CLU_078499_4_1_9"/>
<dbReference type="GO" id="GO:0005737">
    <property type="term" value="C:cytoplasm"/>
    <property type="evidence" value="ECO:0007669"/>
    <property type="project" value="UniProtKB-SubCell"/>
</dbReference>
<dbReference type="GO" id="GO:0000917">
    <property type="term" value="P:division septum assembly"/>
    <property type="evidence" value="ECO:0007669"/>
    <property type="project" value="UniProtKB-KW"/>
</dbReference>
<dbReference type="GO" id="GO:0043093">
    <property type="term" value="P:FtsZ-dependent cytokinesis"/>
    <property type="evidence" value="ECO:0007669"/>
    <property type="project" value="UniProtKB-UniRule"/>
</dbReference>
<dbReference type="Gene3D" id="3.30.110.150">
    <property type="entry name" value="SepF-like protein"/>
    <property type="match status" value="1"/>
</dbReference>
<dbReference type="HAMAP" id="MF_01197">
    <property type="entry name" value="SepF"/>
    <property type="match status" value="1"/>
</dbReference>
<dbReference type="InterPro" id="IPR023052">
    <property type="entry name" value="Cell_div_SepF"/>
</dbReference>
<dbReference type="InterPro" id="IPR007561">
    <property type="entry name" value="Cell_div_SepF/SepF-rel"/>
</dbReference>
<dbReference type="InterPro" id="IPR038594">
    <property type="entry name" value="SepF-like_sf"/>
</dbReference>
<dbReference type="PANTHER" id="PTHR35798">
    <property type="entry name" value="CELL DIVISION PROTEIN SEPF"/>
    <property type="match status" value="1"/>
</dbReference>
<dbReference type="PANTHER" id="PTHR35798:SF1">
    <property type="entry name" value="CELL DIVISION PROTEIN SEPF"/>
    <property type="match status" value="1"/>
</dbReference>
<dbReference type="Pfam" id="PF04472">
    <property type="entry name" value="SepF"/>
    <property type="match status" value="1"/>
</dbReference>
<evidence type="ECO:0000255" key="1">
    <source>
        <dbReference type="HAMAP-Rule" id="MF_01197"/>
    </source>
</evidence>
<evidence type="ECO:0000256" key="2">
    <source>
        <dbReference type="SAM" id="MobiDB-lite"/>
    </source>
</evidence>
<keyword id="KW-0131">Cell cycle</keyword>
<keyword id="KW-0132">Cell division</keyword>
<keyword id="KW-0963">Cytoplasm</keyword>
<keyword id="KW-0717">Septation</keyword>
<gene>
    <name evidence="1" type="primary">sepF</name>
    <name type="ordered locus">BAMEG_0589</name>
</gene>
<protein>
    <recommendedName>
        <fullName evidence="1">Cell division protein SepF</fullName>
    </recommendedName>
</protein>
<organism>
    <name type="scientific">Bacillus anthracis (strain CDC 684 / NRRL 3495)</name>
    <dbReference type="NCBI Taxonomy" id="568206"/>
    <lineage>
        <taxon>Bacteria</taxon>
        <taxon>Bacillati</taxon>
        <taxon>Bacillota</taxon>
        <taxon>Bacilli</taxon>
        <taxon>Bacillales</taxon>
        <taxon>Bacillaceae</taxon>
        <taxon>Bacillus</taxon>
        <taxon>Bacillus cereus group</taxon>
    </lineage>
</organism>
<proteinExistence type="inferred from homology"/>
<sequence length="156" mass="17725">MSWSKVKYFFFDTPEEKEAAQYSYEKEQTDMKKQQDPPEQQDVTFPKAQPKQNVVSIETAKQSSKVVLLEPRTYSEAQGIADHLKGRRAVVINLQRMSTDQAVRIVDFLSGTVYAIGGDIQKIGPKTFMCTPENVDIVGAISELFGEEDDTNIKRW</sequence>